<protein>
    <recommendedName>
        <fullName evidence="1">Large ribosomal subunit protein bL32c</fullName>
    </recommendedName>
    <alternativeName>
        <fullName evidence="2">50S ribosomal protein L32, chloroplastic</fullName>
    </alternativeName>
</protein>
<evidence type="ECO:0000255" key="1">
    <source>
        <dbReference type="HAMAP-Rule" id="MF_00340"/>
    </source>
</evidence>
<evidence type="ECO:0000305" key="2"/>
<name>RK32_ATRBE</name>
<dbReference type="EMBL" id="AJ316582">
    <property type="protein sequence ID" value="CAC88094.1"/>
    <property type="molecule type" value="Genomic_DNA"/>
</dbReference>
<dbReference type="RefSeq" id="NP_783280.1">
    <property type="nucleotide sequence ID" value="NC_004561.1"/>
</dbReference>
<dbReference type="SMR" id="Q8S8U9"/>
<dbReference type="GeneID" id="806572"/>
<dbReference type="GO" id="GO:0009507">
    <property type="term" value="C:chloroplast"/>
    <property type="evidence" value="ECO:0007669"/>
    <property type="project" value="UniProtKB-SubCell"/>
</dbReference>
<dbReference type="GO" id="GO:0015934">
    <property type="term" value="C:large ribosomal subunit"/>
    <property type="evidence" value="ECO:0007669"/>
    <property type="project" value="InterPro"/>
</dbReference>
<dbReference type="GO" id="GO:0003735">
    <property type="term" value="F:structural constituent of ribosome"/>
    <property type="evidence" value="ECO:0007669"/>
    <property type="project" value="InterPro"/>
</dbReference>
<dbReference type="GO" id="GO:0006412">
    <property type="term" value="P:translation"/>
    <property type="evidence" value="ECO:0007669"/>
    <property type="project" value="UniProtKB-UniRule"/>
</dbReference>
<dbReference type="HAMAP" id="MF_00340">
    <property type="entry name" value="Ribosomal_bL32"/>
    <property type="match status" value="1"/>
</dbReference>
<dbReference type="InterPro" id="IPR002677">
    <property type="entry name" value="Ribosomal_bL32"/>
</dbReference>
<dbReference type="InterPro" id="IPR044958">
    <property type="entry name" value="Ribosomal_bL32_plant/cyanobact"/>
</dbReference>
<dbReference type="InterPro" id="IPR011332">
    <property type="entry name" value="Ribosomal_zn-bd"/>
</dbReference>
<dbReference type="PANTHER" id="PTHR36083">
    <property type="entry name" value="50S RIBOSOMAL PROTEIN L32, CHLOROPLASTIC"/>
    <property type="match status" value="1"/>
</dbReference>
<dbReference type="PANTHER" id="PTHR36083:SF1">
    <property type="entry name" value="LARGE RIBOSOMAL SUBUNIT PROTEIN BL32C"/>
    <property type="match status" value="1"/>
</dbReference>
<dbReference type="Pfam" id="PF01783">
    <property type="entry name" value="Ribosomal_L32p"/>
    <property type="match status" value="1"/>
</dbReference>
<dbReference type="SUPFAM" id="SSF57829">
    <property type="entry name" value="Zn-binding ribosomal proteins"/>
    <property type="match status" value="1"/>
</dbReference>
<comment type="subcellular location">
    <subcellularLocation>
        <location>Plastid</location>
        <location>Chloroplast</location>
    </subcellularLocation>
</comment>
<comment type="similarity">
    <text evidence="1">Belongs to the bacterial ribosomal protein bL32 family.</text>
</comment>
<organism>
    <name type="scientific">Atropa belladonna</name>
    <name type="common">Belladonna</name>
    <name type="synonym">Deadly nightshade</name>
    <dbReference type="NCBI Taxonomy" id="33113"/>
    <lineage>
        <taxon>Eukaryota</taxon>
        <taxon>Viridiplantae</taxon>
        <taxon>Streptophyta</taxon>
        <taxon>Embryophyta</taxon>
        <taxon>Tracheophyta</taxon>
        <taxon>Spermatophyta</taxon>
        <taxon>Magnoliopsida</taxon>
        <taxon>eudicotyledons</taxon>
        <taxon>Gunneridae</taxon>
        <taxon>Pentapetalae</taxon>
        <taxon>asterids</taxon>
        <taxon>lamiids</taxon>
        <taxon>Solanales</taxon>
        <taxon>Solanaceae</taxon>
        <taxon>Solanoideae</taxon>
        <taxon>Hyoscyameae</taxon>
        <taxon>Atropa</taxon>
    </lineage>
</organism>
<accession>Q8S8U9</accession>
<proteinExistence type="inferred from homology"/>
<gene>
    <name evidence="1" type="primary">rpl32</name>
</gene>
<feature type="chain" id="PRO_0000172450" description="Large ribosomal subunit protein bL32c">
    <location>
        <begin position="1"/>
        <end position="55"/>
    </location>
</feature>
<reference key="1">
    <citation type="journal article" date="2002" name="Mol. Biol. Evol.">
        <title>The plastid chromosome of Atropa belladonna and its comparison with that of Nicotiana tabacum: the role of RNA editing in generating divergence in the process of plant speciation.</title>
        <authorList>
            <person name="Schmitz-Linneweber C."/>
            <person name="Regel R."/>
            <person name="Du T.G."/>
            <person name="Hupfer H."/>
            <person name="Herrmann R.G."/>
            <person name="Maier R.M."/>
        </authorList>
    </citation>
    <scope>NUCLEOTIDE SEQUENCE [LARGE SCALE GENOMIC DNA]</scope>
    <source>
        <strain>cv. Ab5p(kan)</strain>
    </source>
</reference>
<geneLocation type="chloroplast"/>
<sequence>MAVPKKRTSTSKKRIRKNIWKRKGYWVALKAFSLAKSLSTGNSKSFFVRQTKINK</sequence>
<keyword id="KW-0150">Chloroplast</keyword>
<keyword id="KW-0934">Plastid</keyword>
<keyword id="KW-0687">Ribonucleoprotein</keyword>
<keyword id="KW-0689">Ribosomal protein</keyword>